<organism>
    <name type="scientific">Listeria innocua serovar 6a (strain ATCC BAA-680 / CLIP 11262)</name>
    <dbReference type="NCBI Taxonomy" id="272626"/>
    <lineage>
        <taxon>Bacteria</taxon>
        <taxon>Bacillati</taxon>
        <taxon>Bacillota</taxon>
        <taxon>Bacilli</taxon>
        <taxon>Bacillales</taxon>
        <taxon>Listeriaceae</taxon>
        <taxon>Listeria</taxon>
    </lineage>
</organism>
<name>LEUC_LISIN</name>
<proteinExistence type="inferred from homology"/>
<gene>
    <name evidence="1" type="primary">leuC</name>
    <name type="ordered locus">lin2096</name>
</gene>
<keyword id="KW-0004">4Fe-4S</keyword>
<keyword id="KW-0028">Amino-acid biosynthesis</keyword>
<keyword id="KW-0100">Branched-chain amino acid biosynthesis</keyword>
<keyword id="KW-0408">Iron</keyword>
<keyword id="KW-0411">Iron-sulfur</keyword>
<keyword id="KW-0432">Leucine biosynthesis</keyword>
<keyword id="KW-0456">Lyase</keyword>
<keyword id="KW-0479">Metal-binding</keyword>
<comment type="function">
    <text evidence="1">Catalyzes the isomerization between 2-isopropylmalate and 3-isopropylmalate, via the formation of 2-isopropylmaleate.</text>
</comment>
<comment type="catalytic activity">
    <reaction evidence="1">
        <text>(2R,3S)-3-isopropylmalate = (2S)-2-isopropylmalate</text>
        <dbReference type="Rhea" id="RHEA:32287"/>
        <dbReference type="ChEBI" id="CHEBI:1178"/>
        <dbReference type="ChEBI" id="CHEBI:35121"/>
        <dbReference type="EC" id="4.2.1.33"/>
    </reaction>
</comment>
<comment type="cofactor">
    <cofactor evidence="1">
        <name>[4Fe-4S] cluster</name>
        <dbReference type="ChEBI" id="CHEBI:49883"/>
    </cofactor>
    <text evidence="1">Binds 1 [4Fe-4S] cluster per subunit.</text>
</comment>
<comment type="pathway">
    <text evidence="1">Amino-acid biosynthesis; L-leucine biosynthesis; L-leucine from 3-methyl-2-oxobutanoate: step 2/4.</text>
</comment>
<comment type="subunit">
    <text evidence="1">Heterodimer of LeuC and LeuD.</text>
</comment>
<comment type="similarity">
    <text evidence="1">Belongs to the aconitase/IPM isomerase family. LeuC type 1 subfamily.</text>
</comment>
<feature type="chain" id="PRO_0000076757" description="3-isopropylmalate dehydratase large subunit">
    <location>
        <begin position="1"/>
        <end position="462"/>
    </location>
</feature>
<feature type="binding site" evidence="1">
    <location>
        <position position="337"/>
    </location>
    <ligand>
        <name>[4Fe-4S] cluster</name>
        <dbReference type="ChEBI" id="CHEBI:49883"/>
    </ligand>
</feature>
<feature type="binding site" evidence="1">
    <location>
        <position position="397"/>
    </location>
    <ligand>
        <name>[4Fe-4S] cluster</name>
        <dbReference type="ChEBI" id="CHEBI:49883"/>
    </ligand>
</feature>
<feature type="binding site" evidence="1">
    <location>
        <position position="400"/>
    </location>
    <ligand>
        <name>[4Fe-4S] cluster</name>
        <dbReference type="ChEBI" id="CHEBI:49883"/>
    </ligand>
</feature>
<protein>
    <recommendedName>
        <fullName evidence="1">3-isopropylmalate dehydratase large subunit</fullName>
        <ecNumber evidence="1">4.2.1.33</ecNumber>
    </recommendedName>
    <alternativeName>
        <fullName evidence="1">Alpha-IPM isomerase</fullName>
        <shortName evidence="1">IPMI</shortName>
    </alternativeName>
    <alternativeName>
        <fullName evidence="1">Isopropylmalate isomerase</fullName>
    </alternativeName>
</protein>
<reference key="1">
    <citation type="journal article" date="2001" name="Science">
        <title>Comparative genomics of Listeria species.</title>
        <authorList>
            <person name="Glaser P."/>
            <person name="Frangeul L."/>
            <person name="Buchrieser C."/>
            <person name="Rusniok C."/>
            <person name="Amend A."/>
            <person name="Baquero F."/>
            <person name="Berche P."/>
            <person name="Bloecker H."/>
            <person name="Brandt P."/>
            <person name="Chakraborty T."/>
            <person name="Charbit A."/>
            <person name="Chetouani F."/>
            <person name="Couve E."/>
            <person name="de Daruvar A."/>
            <person name="Dehoux P."/>
            <person name="Domann E."/>
            <person name="Dominguez-Bernal G."/>
            <person name="Duchaud E."/>
            <person name="Durant L."/>
            <person name="Dussurget O."/>
            <person name="Entian K.-D."/>
            <person name="Fsihi H."/>
            <person name="Garcia-del Portillo F."/>
            <person name="Garrido P."/>
            <person name="Gautier L."/>
            <person name="Goebel W."/>
            <person name="Gomez-Lopez N."/>
            <person name="Hain T."/>
            <person name="Hauf J."/>
            <person name="Jackson D."/>
            <person name="Jones L.-M."/>
            <person name="Kaerst U."/>
            <person name="Kreft J."/>
            <person name="Kuhn M."/>
            <person name="Kunst F."/>
            <person name="Kurapkat G."/>
            <person name="Madueno E."/>
            <person name="Maitournam A."/>
            <person name="Mata Vicente J."/>
            <person name="Ng E."/>
            <person name="Nedjari H."/>
            <person name="Nordsiek G."/>
            <person name="Novella S."/>
            <person name="de Pablos B."/>
            <person name="Perez-Diaz J.-C."/>
            <person name="Purcell R."/>
            <person name="Remmel B."/>
            <person name="Rose M."/>
            <person name="Schlueter T."/>
            <person name="Simoes N."/>
            <person name="Tierrez A."/>
            <person name="Vazquez-Boland J.-A."/>
            <person name="Voss H."/>
            <person name="Wehland J."/>
            <person name="Cossart P."/>
        </authorList>
    </citation>
    <scope>NUCLEOTIDE SEQUENCE [LARGE SCALE GENOMIC DNA]</scope>
    <source>
        <strain>ATCC BAA-680 / CLIP 11262</strain>
    </source>
</reference>
<dbReference type="EC" id="4.2.1.33" evidence="1"/>
<dbReference type="EMBL" id="AL596171">
    <property type="protein sequence ID" value="CAC97326.1"/>
    <property type="molecule type" value="Genomic_DNA"/>
</dbReference>
<dbReference type="PIR" id="AF1694">
    <property type="entry name" value="AF1694"/>
</dbReference>
<dbReference type="RefSeq" id="WP_010991748.1">
    <property type="nucleotide sequence ID" value="NC_003212.1"/>
</dbReference>
<dbReference type="SMR" id="Q92A26"/>
<dbReference type="STRING" id="272626.gene:17566454"/>
<dbReference type="DNASU" id="1130818"/>
<dbReference type="GeneID" id="93235435"/>
<dbReference type="KEGG" id="lin:leuC"/>
<dbReference type="eggNOG" id="COG0065">
    <property type="taxonomic scope" value="Bacteria"/>
</dbReference>
<dbReference type="HOGENOM" id="CLU_006714_3_4_9"/>
<dbReference type="OrthoDB" id="9802769at2"/>
<dbReference type="UniPathway" id="UPA00048">
    <property type="reaction ID" value="UER00071"/>
</dbReference>
<dbReference type="Proteomes" id="UP000002513">
    <property type="component" value="Chromosome"/>
</dbReference>
<dbReference type="GO" id="GO:0003861">
    <property type="term" value="F:3-isopropylmalate dehydratase activity"/>
    <property type="evidence" value="ECO:0007669"/>
    <property type="project" value="UniProtKB-UniRule"/>
</dbReference>
<dbReference type="GO" id="GO:0051539">
    <property type="term" value="F:4 iron, 4 sulfur cluster binding"/>
    <property type="evidence" value="ECO:0007669"/>
    <property type="project" value="UniProtKB-KW"/>
</dbReference>
<dbReference type="GO" id="GO:0046872">
    <property type="term" value="F:metal ion binding"/>
    <property type="evidence" value="ECO:0007669"/>
    <property type="project" value="UniProtKB-KW"/>
</dbReference>
<dbReference type="GO" id="GO:0009098">
    <property type="term" value="P:L-leucine biosynthetic process"/>
    <property type="evidence" value="ECO:0007669"/>
    <property type="project" value="UniProtKB-UniRule"/>
</dbReference>
<dbReference type="CDD" id="cd01583">
    <property type="entry name" value="IPMI"/>
    <property type="match status" value="1"/>
</dbReference>
<dbReference type="FunFam" id="3.30.499.10:FF:000007">
    <property type="entry name" value="3-isopropylmalate dehydratase large subunit"/>
    <property type="match status" value="1"/>
</dbReference>
<dbReference type="Gene3D" id="3.30.499.10">
    <property type="entry name" value="Aconitase, domain 3"/>
    <property type="match status" value="2"/>
</dbReference>
<dbReference type="HAMAP" id="MF_01026">
    <property type="entry name" value="LeuC_type1"/>
    <property type="match status" value="1"/>
</dbReference>
<dbReference type="InterPro" id="IPR004430">
    <property type="entry name" value="3-IsopropMal_deHydase_lsu"/>
</dbReference>
<dbReference type="InterPro" id="IPR015931">
    <property type="entry name" value="Acnase/IPM_dHydase_lsu_aba_1/3"/>
</dbReference>
<dbReference type="InterPro" id="IPR001030">
    <property type="entry name" value="Acoase/IPM_deHydtase_lsu_aba"/>
</dbReference>
<dbReference type="InterPro" id="IPR018136">
    <property type="entry name" value="Aconitase_4Fe-4S_BS"/>
</dbReference>
<dbReference type="InterPro" id="IPR036008">
    <property type="entry name" value="Aconitase_4Fe-4S_dom"/>
</dbReference>
<dbReference type="InterPro" id="IPR050067">
    <property type="entry name" value="IPM_dehydratase_rel_enz"/>
</dbReference>
<dbReference type="InterPro" id="IPR033941">
    <property type="entry name" value="IPMI_cat"/>
</dbReference>
<dbReference type="NCBIfam" id="TIGR00170">
    <property type="entry name" value="leuC"/>
    <property type="match status" value="1"/>
</dbReference>
<dbReference type="NCBIfam" id="NF004016">
    <property type="entry name" value="PRK05478.1"/>
    <property type="match status" value="1"/>
</dbReference>
<dbReference type="NCBIfam" id="NF009116">
    <property type="entry name" value="PRK12466.1"/>
    <property type="match status" value="1"/>
</dbReference>
<dbReference type="PANTHER" id="PTHR43822:SF9">
    <property type="entry name" value="3-ISOPROPYLMALATE DEHYDRATASE"/>
    <property type="match status" value="1"/>
</dbReference>
<dbReference type="PANTHER" id="PTHR43822">
    <property type="entry name" value="HOMOACONITASE, MITOCHONDRIAL-RELATED"/>
    <property type="match status" value="1"/>
</dbReference>
<dbReference type="Pfam" id="PF00330">
    <property type="entry name" value="Aconitase"/>
    <property type="match status" value="1"/>
</dbReference>
<dbReference type="PRINTS" id="PR00415">
    <property type="entry name" value="ACONITASE"/>
</dbReference>
<dbReference type="SUPFAM" id="SSF53732">
    <property type="entry name" value="Aconitase iron-sulfur domain"/>
    <property type="match status" value="1"/>
</dbReference>
<dbReference type="PROSITE" id="PS00450">
    <property type="entry name" value="ACONITASE_1"/>
    <property type="match status" value="1"/>
</dbReference>
<dbReference type="PROSITE" id="PS01244">
    <property type="entry name" value="ACONITASE_2"/>
    <property type="match status" value="1"/>
</dbReference>
<sequence length="462" mass="51041">MGKTLFDKLWNRHVIYGKEGEPQLLYVDLHLIHEVTSPQAFEGLRMENRPLRRPDKTFATMDHNVPTEDIFNIQDLVAKKQIEALQTNCEEFGVTLADMGSDRQGIVHMVGPETGLTQPGKVIVCGDSHTATHGAFGAIGFGIGSSEVEHVFATQTIWQQKPKSMGIEINGKLPKGVYAKDIILHLIATYGVAFGTGYAVEYYGETIRNMSMEERMTICNMAIEGGAKMGMMAPDQTTFEYVRGREYAPSDMEKAIRDWETLKTDPDAEYDLHIEMDASILEPYVTWGTNPEMGVPFSKAFPEIKDMNYERAYEYMGLKPGQTAEEIELGYVFIGSCTNARLSDLEEAARIVKGNKVKNNIRALVVPGSRQVRNAAEAIGLDKIFKDAGFEWREPGCSMCLGMNPDQVPDGVHCASTSNRNFEGRQGKGARTHLVSPAMAAAAAINGHFIDIRKEAVISGGN</sequence>
<evidence type="ECO:0000255" key="1">
    <source>
        <dbReference type="HAMAP-Rule" id="MF_01026"/>
    </source>
</evidence>
<accession>Q92A26</accession>